<protein>
    <recommendedName>
        <fullName evidence="7">Mitochondrial carnitine/acylcarnitine carrier protein</fullName>
    </recommendedName>
    <alternativeName>
        <fullName>Carnitine/acylcarnitine translocase</fullName>
        <shortName evidence="6">CAC</shortName>
        <shortName>CACT</shortName>
    </alternativeName>
    <alternativeName>
        <fullName>Solute carrier family 25 member 20</fullName>
    </alternativeName>
</protein>
<organism>
    <name type="scientific">Rattus norvegicus</name>
    <name type="common">Rat</name>
    <dbReference type="NCBI Taxonomy" id="10116"/>
    <lineage>
        <taxon>Eukaryota</taxon>
        <taxon>Metazoa</taxon>
        <taxon>Chordata</taxon>
        <taxon>Craniata</taxon>
        <taxon>Vertebrata</taxon>
        <taxon>Euteleostomi</taxon>
        <taxon>Mammalia</taxon>
        <taxon>Eutheria</taxon>
        <taxon>Euarchontoglires</taxon>
        <taxon>Glires</taxon>
        <taxon>Rodentia</taxon>
        <taxon>Myomorpha</taxon>
        <taxon>Muroidea</taxon>
        <taxon>Muridae</taxon>
        <taxon>Murinae</taxon>
        <taxon>Rattus</taxon>
    </lineage>
</organism>
<evidence type="ECO:0000250" key="1">
    <source>
        <dbReference type="UniProtKB" id="O43772"/>
    </source>
</evidence>
<evidence type="ECO:0000250" key="2">
    <source>
        <dbReference type="UniProtKB" id="Q9Z2Z6"/>
    </source>
</evidence>
<evidence type="ECO:0000255" key="3"/>
<evidence type="ECO:0000269" key="4">
    <source>
    </source>
</evidence>
<evidence type="ECO:0000269" key="5">
    <source>
    </source>
</evidence>
<evidence type="ECO:0000303" key="6">
    <source>
    </source>
</evidence>
<evidence type="ECO:0000305" key="7"/>
<evidence type="ECO:0000305" key="8">
    <source>
    </source>
</evidence>
<evidence type="ECO:0000312" key="9">
    <source>
        <dbReference type="RGD" id="621443"/>
    </source>
</evidence>
<dbReference type="EMBL" id="X97831">
    <property type="protein sequence ID" value="CAA66410.1"/>
    <property type="molecule type" value="mRNA"/>
</dbReference>
<dbReference type="SMR" id="P97521"/>
<dbReference type="FunCoup" id="P97521">
    <property type="interactions" value="1857"/>
</dbReference>
<dbReference type="STRING" id="10116.ENSRNOP00000027520"/>
<dbReference type="ChEMBL" id="CHEMBL2173"/>
<dbReference type="SwissLipids" id="SLP:000001592"/>
<dbReference type="TCDB" id="2.A.29.8.1">
    <property type="family name" value="the mitochondrial carrier (mc) family"/>
</dbReference>
<dbReference type="CarbonylDB" id="P97521"/>
<dbReference type="iPTMnet" id="P97521"/>
<dbReference type="PhosphoSitePlus" id="P97521"/>
<dbReference type="jPOST" id="P97521"/>
<dbReference type="PaxDb" id="10116-ENSRNOP00000027520"/>
<dbReference type="UCSC" id="RGD:621443">
    <property type="organism name" value="rat"/>
</dbReference>
<dbReference type="AGR" id="RGD:621443"/>
<dbReference type="RGD" id="621443">
    <property type="gene designation" value="Slc25a20"/>
</dbReference>
<dbReference type="eggNOG" id="KOG0758">
    <property type="taxonomic scope" value="Eukaryota"/>
</dbReference>
<dbReference type="InParanoid" id="P97521"/>
<dbReference type="PhylomeDB" id="P97521"/>
<dbReference type="BioCyc" id="MetaCyc:MONOMER-14443"/>
<dbReference type="Reactome" id="R-RNO-200425">
    <property type="pathway name" value="Carnitine shuttle"/>
</dbReference>
<dbReference type="PRO" id="PR:P97521"/>
<dbReference type="Proteomes" id="UP000002494">
    <property type="component" value="Unplaced"/>
</dbReference>
<dbReference type="GO" id="GO:0005740">
    <property type="term" value="C:mitochondrial envelope"/>
    <property type="evidence" value="ECO:0000318"/>
    <property type="project" value="GO_Central"/>
</dbReference>
<dbReference type="GO" id="GO:0005743">
    <property type="term" value="C:mitochondrial inner membrane"/>
    <property type="evidence" value="ECO:0000304"/>
    <property type="project" value="RGD"/>
</dbReference>
<dbReference type="GO" id="GO:0005476">
    <property type="term" value="F:carnitine:O-acyl-L-carnitine antiporter activity"/>
    <property type="evidence" value="ECO:0000266"/>
    <property type="project" value="RGD"/>
</dbReference>
<dbReference type="GO" id="GO:0015227">
    <property type="term" value="F:O-acyl-L-carnitine transmembrane transporter activity"/>
    <property type="evidence" value="ECO:0000314"/>
    <property type="project" value="UniProtKB"/>
</dbReference>
<dbReference type="GO" id="GO:1902603">
    <property type="term" value="P:carnitine transmembrane transport"/>
    <property type="evidence" value="ECO:0000314"/>
    <property type="project" value="UniProtKB"/>
</dbReference>
<dbReference type="GO" id="GO:0001701">
    <property type="term" value="P:in utero embryonic development"/>
    <property type="evidence" value="ECO:0000266"/>
    <property type="project" value="RGD"/>
</dbReference>
<dbReference type="GO" id="GO:0006869">
    <property type="term" value="P:lipid transport"/>
    <property type="evidence" value="ECO:0007669"/>
    <property type="project" value="UniProtKB-KW"/>
</dbReference>
<dbReference type="GO" id="GO:0006839">
    <property type="term" value="P:mitochondrial transport"/>
    <property type="evidence" value="ECO:0000318"/>
    <property type="project" value="GO_Central"/>
</dbReference>
<dbReference type="FunFam" id="1.50.40.10:FF:000051">
    <property type="entry name" value="Mitochondrial carnitine/acylcarnitine carrier protein"/>
    <property type="match status" value="1"/>
</dbReference>
<dbReference type="FunFam" id="1.50.40.10:FF:000040">
    <property type="entry name" value="mitochondrial carnitine/acylcarnitine carrier protein"/>
    <property type="match status" value="1"/>
</dbReference>
<dbReference type="Gene3D" id="1.50.40.10">
    <property type="entry name" value="Mitochondrial carrier domain"/>
    <property type="match status" value="2"/>
</dbReference>
<dbReference type="InterPro" id="IPR050567">
    <property type="entry name" value="Mitochondrial_Carrier"/>
</dbReference>
<dbReference type="InterPro" id="IPR018108">
    <property type="entry name" value="Mitochondrial_sb/sol_carrier"/>
</dbReference>
<dbReference type="InterPro" id="IPR023395">
    <property type="entry name" value="Mt_carrier_dom_sf"/>
</dbReference>
<dbReference type="PANTHER" id="PTHR45624">
    <property type="entry name" value="MITOCHONDRIAL BASIC AMINO ACIDS TRANSPORTER-RELATED"/>
    <property type="match status" value="1"/>
</dbReference>
<dbReference type="PANTHER" id="PTHR45624:SF56">
    <property type="entry name" value="MITOCHONDRIAL CARNITINE_ACYLCARNITINE CARRIER PROTEIN"/>
    <property type="match status" value="1"/>
</dbReference>
<dbReference type="Pfam" id="PF00153">
    <property type="entry name" value="Mito_carr"/>
    <property type="match status" value="3"/>
</dbReference>
<dbReference type="SUPFAM" id="SSF103506">
    <property type="entry name" value="Mitochondrial carrier"/>
    <property type="match status" value="1"/>
</dbReference>
<dbReference type="PROSITE" id="PS50920">
    <property type="entry name" value="SOLCAR"/>
    <property type="match status" value="3"/>
</dbReference>
<name>MCAT_RAT</name>
<keyword id="KW-0007">Acetylation</keyword>
<keyword id="KW-0903">Direct protein sequencing</keyword>
<keyword id="KW-0445">Lipid transport</keyword>
<keyword id="KW-0472">Membrane</keyword>
<keyword id="KW-0496">Mitochondrion</keyword>
<keyword id="KW-0999">Mitochondrion inner membrane</keyword>
<keyword id="KW-1185">Reference proteome</keyword>
<keyword id="KW-0677">Repeat</keyword>
<keyword id="KW-0812">Transmembrane</keyword>
<keyword id="KW-1133">Transmembrane helix</keyword>
<keyword id="KW-0813">Transport</keyword>
<feature type="initiator methionine" description="Removed" evidence="1">
    <location>
        <position position="1"/>
    </location>
</feature>
<feature type="chain" id="PRO_0000090631" description="Mitochondrial carnitine/acylcarnitine carrier protein">
    <location>
        <begin position="2"/>
        <end position="301"/>
    </location>
</feature>
<feature type="topological domain" description="Cytoplasmic" evidence="3">
    <location>
        <begin position="2"/>
        <end position="12"/>
    </location>
</feature>
<feature type="transmembrane region" description="Helical; Name=1" evidence="3">
    <location>
        <begin position="13"/>
        <end position="31"/>
    </location>
</feature>
<feature type="topological domain" description="Mitochondrial matrix" evidence="3">
    <location>
        <begin position="32"/>
        <end position="73"/>
    </location>
</feature>
<feature type="transmembrane region" description="Helical; Name=2" evidence="3">
    <location>
        <begin position="74"/>
        <end position="93"/>
    </location>
</feature>
<feature type="topological domain" description="Cytoplasmic" evidence="3">
    <location>
        <begin position="94"/>
        <end position="112"/>
    </location>
</feature>
<feature type="transmembrane region" description="Helical; Name=3" evidence="3">
    <location>
        <begin position="113"/>
        <end position="131"/>
    </location>
</feature>
<feature type="topological domain" description="Mitochondrial matrix" evidence="3">
    <location>
        <begin position="132"/>
        <end position="170"/>
    </location>
</feature>
<feature type="transmembrane region" description="Helical; Name=4" evidence="3">
    <location>
        <begin position="171"/>
        <end position="190"/>
    </location>
</feature>
<feature type="topological domain" description="Cytoplasmic" evidence="3">
    <location>
        <begin position="191"/>
        <end position="211"/>
    </location>
</feature>
<feature type="transmembrane region" description="Helical; Name=5" evidence="3">
    <location>
        <begin position="212"/>
        <end position="230"/>
    </location>
</feature>
<feature type="topological domain" description="Mitochondrial matrix" evidence="3">
    <location>
        <begin position="231"/>
        <end position="267"/>
    </location>
</feature>
<feature type="transmembrane region" description="Helical; Name=6" evidence="3">
    <location>
        <begin position="268"/>
        <end position="287"/>
    </location>
</feature>
<feature type="topological domain" description="Cytoplasmic" evidence="3">
    <location>
        <begin position="288"/>
        <end position="301"/>
    </location>
</feature>
<feature type="repeat" description="Solcar 1">
    <location>
        <begin position="8"/>
        <end position="99"/>
    </location>
</feature>
<feature type="repeat" description="Solcar 2">
    <location>
        <begin position="108"/>
        <end position="196"/>
    </location>
</feature>
<feature type="repeat" description="Solcar 3">
    <location>
        <begin position="207"/>
        <end position="293"/>
    </location>
</feature>
<feature type="modified residue" description="N-acetylalanine" evidence="1">
    <location>
        <position position="2"/>
    </location>
</feature>
<feature type="modified residue" description="N6-acetyllysine" evidence="2">
    <location>
        <position position="148"/>
    </location>
</feature>
<feature type="modified residue" description="N6-acetyllysine" evidence="2">
    <location>
        <position position="157"/>
    </location>
</feature>
<feature type="modified residue" description="N6-acetyllysine; alternate" evidence="2">
    <location>
        <position position="170"/>
    </location>
</feature>
<feature type="modified residue" description="N6-succinyllysine; alternate" evidence="2">
    <location>
        <position position="170"/>
    </location>
</feature>
<proteinExistence type="evidence at protein level"/>
<reference key="1">
    <citation type="journal article" date="1997" name="Biochem. J.">
        <title>The mitochondrial carnitine carrier protein: cDNA cloning, primary structure and comparison with other mitochondrial transport proteins.</title>
        <authorList>
            <person name="Indiveri C."/>
            <person name="Iacobazzi V."/>
            <person name="Giangregorio N."/>
            <person name="Palmieri F."/>
        </authorList>
    </citation>
    <scope>NUCLEOTIDE SEQUENCE [MRNA]</scope>
    <scope>PROTEIN SEQUENCE OF 86-101; 108-132; 180-197; 207-216 AND 256-263</scope>
    <source>
        <tissue>Liver</tissue>
    </source>
</reference>
<reference key="2">
    <citation type="journal article" date="1994" name="Biochim. Biophys. Acta">
        <title>The reconstituted carnitine carrier from rat liver mitochondria: evidence for a transport mechanism different from that of the other mitochondrial translocators.</title>
        <authorList>
            <person name="Indiveri C."/>
            <person name="Tonazzi A."/>
            <person name="Palmieri F."/>
        </authorList>
    </citation>
    <scope>FUNCTION</scope>
    <scope>TRANSPORT ACTIVITY</scope>
</reference>
<reference key="3">
    <citation type="journal article" date="1998" name="Biochem. Biophys. Res. Commun.">
        <title>Bacterial overexpression, purification, and reconstitution of the carnitine/acylcarnitine carrier from rat liver mitochondria.</title>
        <authorList>
            <person name="Indiveri C."/>
            <person name="Iacobazzi V."/>
            <person name="Giangregorio N."/>
            <person name="Palmieri F."/>
        </authorList>
    </citation>
    <scope>FUNCTION</scope>
    <scope>TRANSPORT ACTIVITY</scope>
    <scope>BIOPHYSICOCHEMICAL PROPERTIES</scope>
</reference>
<sequence>MAEEPKPISPLKNLLAGGFGGVCLVFVGHPLDTVKVRLQTQPPSLPGQPPMYSGTIDCFRKTLFREGITGLYRGMAAPIIGVTPMFAVCFFGFGLGKRLQQKSPEDELTYPQLFTAGMLSGVFTTGIMTPGERIKCLLQIQASSGKNKYSGTLDCAKKLYQEFGIRGFYKGTALTLMRDVPASGMYFMTYEWLKNLFTPQGKSVHDLSVPRVLVAGGFRGIFNWVVAIPPDVLKSRFQTAPPGKYPNGFRDVLRELIREEGVTSLYKGFNAVMIRAFPANAACFLGFEIPMKILNWIAPNL</sequence>
<accession>P97521</accession>
<comment type="function">
    <text evidence="4 5 8">Mediates the electroneutral exchange of acylcarnitines (O-acyl-(R)-carnitine or L-acylcarnitine) of different acyl chain lengths (ranging from O-acetyl-(R)-carnitine to long-chain O-acyl-(R)-carnitines) with free carnitine ((R)-carnitine or L-carnitine) across the mitochondrial inner membrane, via a ping-pong mechanism (PubMed:9731180). Key player in the mitochondrial oxidation pathway, it translocates the fatty acids in the form of acylcarnitines into the mitochondrial matrix, where the carnitine palmitoyltransferase 2 (CPT-2) activates them to undergo fatty acid beta-oxidation (Probable). Catalyzes the unidirectional transport (uniport) of carnitine at lower rates than the antiport (exchange) (PubMed:8305461).</text>
</comment>
<comment type="catalytic activity">
    <reaction evidence="5 8">
        <text>O-acetyl-(R)-carnitine(in) + (R)-carnitine(out) = O-acetyl-(R)-carnitine(out) + (R)-carnitine(in)</text>
        <dbReference type="Rhea" id="RHEA:49908"/>
        <dbReference type="ChEBI" id="CHEBI:16347"/>
        <dbReference type="ChEBI" id="CHEBI:57589"/>
    </reaction>
</comment>
<comment type="catalytic activity">
    <reaction evidence="5 8">
        <text>an O-acyl-(R)-carnitine(in) + (R)-carnitine(out) = an O-acyl-(R)-carnitine(out) + (R)-carnitine(in)</text>
        <dbReference type="Rhea" id="RHEA:49924"/>
        <dbReference type="ChEBI" id="CHEBI:16347"/>
        <dbReference type="ChEBI" id="CHEBI:75659"/>
    </reaction>
</comment>
<comment type="catalytic activity">
    <reaction evidence="5 8">
        <text>O-propanoyl-(R)-carnitine(in) + (R)-carnitine(out) = O-propanoyl-(R)-carnitine(out) + (R)-carnitine(in)</text>
        <dbReference type="Rhea" id="RHEA:49912"/>
        <dbReference type="ChEBI" id="CHEBI:16347"/>
        <dbReference type="ChEBI" id="CHEBI:53210"/>
    </reaction>
</comment>
<comment type="catalytic activity">
    <reaction evidence="5">
        <text>O-hexadecanoyl-(R)-carnitine(in) + (R)-carnitine(out) = O-hexadecanoyl-(R)-carnitine(out) + (R)-carnitine(in)</text>
        <dbReference type="Rhea" id="RHEA:49916"/>
        <dbReference type="ChEBI" id="CHEBI:16347"/>
        <dbReference type="ChEBI" id="CHEBI:17490"/>
    </reaction>
</comment>
<comment type="catalytic activity">
    <reaction evidence="5">
        <text>O-octanoyl-(R)-carnitine(in) + (R)-carnitine(out) = O-octanoyl-(R)-carnitine(out) + (R)-carnitine(in)</text>
        <dbReference type="Rhea" id="RHEA:49920"/>
        <dbReference type="ChEBI" id="CHEBI:16347"/>
        <dbReference type="ChEBI" id="CHEBI:18102"/>
    </reaction>
</comment>
<comment type="catalytic activity">
    <reaction evidence="4">
        <text>(R)-carnitine(in) = (R)-carnitine(out)</text>
        <dbReference type="Rhea" id="RHEA:34959"/>
        <dbReference type="ChEBI" id="CHEBI:16347"/>
    </reaction>
</comment>
<comment type="biophysicochemical properties">
    <kinetics>
        <KM evidence="5">0.47 mM for carnitine (at 25 degrees Celsius)</KM>
    </kinetics>
</comment>
<comment type="subcellular location">
    <subcellularLocation>
        <location>Mitochondrion inner membrane</location>
        <topology>Multi-pass membrane protein</topology>
    </subcellularLocation>
</comment>
<comment type="PTM">
    <text>The N-terminus is blocked.</text>
</comment>
<comment type="similarity">
    <text evidence="7">Belongs to the mitochondrial carrier (TC 2.A.29) family.</text>
</comment>
<gene>
    <name evidence="9" type="primary">Slc25a20</name>
    <name type="synonym">Cact</name>
</gene>